<dbReference type="EMBL" id="AY226580">
    <property type="protein sequence ID" value="AAP23941.1"/>
    <property type="molecule type" value="mRNA"/>
</dbReference>
<dbReference type="SMR" id="Q84N29"/>
<dbReference type="STRING" id="4565.Q84N29"/>
<dbReference type="PaxDb" id="4565-Traes_5BL_CE73B6BFF.1"/>
<dbReference type="EnsemblPlants" id="TraesARI7B03G04186070.1">
    <property type="protein sequence ID" value="TraesARI7B03G04186070.1"/>
    <property type="gene ID" value="TraesARI7B03G04186070"/>
</dbReference>
<dbReference type="EnsemblPlants" id="TraesCS5B02G145900.2">
    <property type="protein sequence ID" value="TraesCS5B02G145900.2"/>
    <property type="gene ID" value="TraesCS5B02G145900"/>
</dbReference>
<dbReference type="EnsemblPlants" id="TraesCS5B03G0403700.1">
    <property type="protein sequence ID" value="TraesCS5B03G0403700.1.CDS"/>
    <property type="gene ID" value="TraesCS5B03G0403700"/>
</dbReference>
<dbReference type="EnsemblPlants" id="TraesJAG5B03G02864450.1">
    <property type="protein sequence ID" value="TraesJAG5B03G02864450.1"/>
    <property type="gene ID" value="TraesJAG5B03G02864450"/>
</dbReference>
<dbReference type="EnsemblPlants" id="TraesJUL5B03G02887220.1">
    <property type="protein sequence ID" value="TraesJUL5B03G02887220.1"/>
    <property type="gene ID" value="TraesJUL5B03G02887220"/>
</dbReference>
<dbReference type="EnsemblPlants" id="TraesKAR5B01G0180000.1">
    <property type="protein sequence ID" value="cds.TraesKAR5B01G0180000.1"/>
    <property type="gene ID" value="TraesKAR5B01G0180000"/>
</dbReference>
<dbReference type="EnsemblPlants" id="TraesLAC5B03G02819550.1">
    <property type="protein sequence ID" value="TraesLAC5B03G02819550.1"/>
    <property type="gene ID" value="TraesLAC5B03G02819550"/>
</dbReference>
<dbReference type="EnsemblPlants" id="TraesLDM5B03G02868450.1">
    <property type="protein sequence ID" value="TraesLDM5B03G02868450.1"/>
    <property type="gene ID" value="TraesLDM5B03G02868450"/>
</dbReference>
<dbReference type="EnsemblPlants" id="TraesMAC5B03G02865660.1">
    <property type="protein sequence ID" value="TraesMAC5B03G02865660.1"/>
    <property type="gene ID" value="TraesMAC5B03G02865660"/>
</dbReference>
<dbReference type="EnsemblPlants" id="TraesNOR5B03G02892890.1">
    <property type="protein sequence ID" value="TraesNOR5B03G02892890.1"/>
    <property type="gene ID" value="TraesNOR5B03G02892890"/>
</dbReference>
<dbReference type="EnsemblPlants" id="TraesPARA_EIv1.0_1667900.1">
    <property type="protein sequence ID" value="TraesPARA_EIv1.0_1667900.1.CDS"/>
    <property type="gene ID" value="TraesPARA_EIv1.0_1667900"/>
</dbReference>
<dbReference type="EnsemblPlants" id="TraesRN5B0100406100.1">
    <property type="protein sequence ID" value="TraesRN5B0100406100.1"/>
    <property type="gene ID" value="TraesRN5B0100406100"/>
</dbReference>
<dbReference type="EnsemblPlants" id="TraesSTA5B03G02858010.1">
    <property type="protein sequence ID" value="TraesSTA5B03G02858010.1"/>
    <property type="gene ID" value="TraesSTA5B03G02858010"/>
</dbReference>
<dbReference type="EnsemblPlants" id="TraesSYM7B03G04154930.1">
    <property type="protein sequence ID" value="TraesSYM7B03G04154930.1"/>
    <property type="gene ID" value="TraesSYM7B03G04154930"/>
</dbReference>
<dbReference type="Gramene" id="TraesARI7B03G04186070.1">
    <property type="protein sequence ID" value="TraesARI7B03G04186070.1"/>
    <property type="gene ID" value="TraesARI7B03G04186070"/>
</dbReference>
<dbReference type="Gramene" id="TraesCS5B02G145900.2">
    <property type="protein sequence ID" value="TraesCS5B02G145900.2"/>
    <property type="gene ID" value="TraesCS5B02G145900"/>
</dbReference>
<dbReference type="Gramene" id="TraesCS5B03G0403700.1">
    <property type="protein sequence ID" value="TraesCS5B03G0403700.1.CDS"/>
    <property type="gene ID" value="TraesCS5B03G0403700"/>
</dbReference>
<dbReference type="Gramene" id="TraesJAG5B03G02864450.1">
    <property type="protein sequence ID" value="TraesJAG5B03G02864450.1"/>
    <property type="gene ID" value="TraesJAG5B03G02864450"/>
</dbReference>
<dbReference type="Gramene" id="TraesJUL5B03G02887220.1">
    <property type="protein sequence ID" value="TraesJUL5B03G02887220.1"/>
    <property type="gene ID" value="TraesJUL5B03G02887220"/>
</dbReference>
<dbReference type="Gramene" id="TraesKAR5B01G0180000.1">
    <property type="protein sequence ID" value="cds.TraesKAR5B01G0180000.1"/>
    <property type="gene ID" value="TraesKAR5B01G0180000"/>
</dbReference>
<dbReference type="Gramene" id="TraesLAC5B03G02819550.1">
    <property type="protein sequence ID" value="TraesLAC5B03G02819550.1"/>
    <property type="gene ID" value="TraesLAC5B03G02819550"/>
</dbReference>
<dbReference type="Gramene" id="TraesLDM5B03G02868450.1">
    <property type="protein sequence ID" value="TraesLDM5B03G02868450.1"/>
    <property type="gene ID" value="TraesLDM5B03G02868450"/>
</dbReference>
<dbReference type="Gramene" id="TraesMAC5B03G02865660.1">
    <property type="protein sequence ID" value="TraesMAC5B03G02865660.1"/>
    <property type="gene ID" value="TraesMAC5B03G02865660"/>
</dbReference>
<dbReference type="Gramene" id="TraesNOR5B03G02892890.1">
    <property type="protein sequence ID" value="TraesNOR5B03G02892890.1"/>
    <property type="gene ID" value="TraesNOR5B03G02892890"/>
</dbReference>
<dbReference type="Gramene" id="TraesPARA_EIv1.0_1667900.1">
    <property type="protein sequence ID" value="TraesPARA_EIv1.0_1667900.1.CDS"/>
    <property type="gene ID" value="TraesPARA_EIv1.0_1667900"/>
</dbReference>
<dbReference type="Gramene" id="TraesRN5B0100406100.1">
    <property type="protein sequence ID" value="TraesRN5B0100406100.1"/>
    <property type="gene ID" value="TraesRN5B0100406100"/>
</dbReference>
<dbReference type="Gramene" id="TraesSTA5B03G02858010.1">
    <property type="protein sequence ID" value="TraesSTA5B03G02858010.1"/>
    <property type="gene ID" value="TraesSTA5B03G02858010"/>
</dbReference>
<dbReference type="Gramene" id="TraesSYM7B03G04154930.1">
    <property type="protein sequence ID" value="TraesSYM7B03G04154930.1"/>
    <property type="gene ID" value="TraesSYM7B03G04154930"/>
</dbReference>
<dbReference type="eggNOG" id="ENOG502S4CI">
    <property type="taxonomic scope" value="Eukaryota"/>
</dbReference>
<dbReference type="HOGENOM" id="CLU_128423_0_0_1"/>
<dbReference type="OMA" id="WPPEREM"/>
<dbReference type="Proteomes" id="UP000019116">
    <property type="component" value="Chromosome 5B"/>
</dbReference>
<dbReference type="ExpressionAtlas" id="Q84N29">
    <property type="expression patterns" value="baseline and differential"/>
</dbReference>
<dbReference type="GO" id="GO:0008289">
    <property type="term" value="F:lipid binding"/>
    <property type="evidence" value="ECO:0007669"/>
    <property type="project" value="UniProtKB-KW"/>
</dbReference>
<dbReference type="GO" id="GO:0006869">
    <property type="term" value="P:lipid transport"/>
    <property type="evidence" value="ECO:0007669"/>
    <property type="project" value="InterPro"/>
</dbReference>
<dbReference type="GO" id="GO:0009723">
    <property type="term" value="P:response to ethylene"/>
    <property type="evidence" value="ECO:0000314"/>
    <property type="project" value="UniProtKB"/>
</dbReference>
<dbReference type="GO" id="GO:0042542">
    <property type="term" value="P:response to hydrogen peroxide"/>
    <property type="evidence" value="ECO:0000314"/>
    <property type="project" value="UniProtKB"/>
</dbReference>
<dbReference type="GO" id="GO:0009751">
    <property type="term" value="P:response to salicylic acid"/>
    <property type="evidence" value="ECO:0000314"/>
    <property type="project" value="UniProtKB"/>
</dbReference>
<dbReference type="GO" id="GO:0009611">
    <property type="term" value="P:response to wounding"/>
    <property type="evidence" value="ECO:0000314"/>
    <property type="project" value="UniProtKB"/>
</dbReference>
<dbReference type="CDD" id="cd01960">
    <property type="entry name" value="nsLTP1"/>
    <property type="match status" value="1"/>
</dbReference>
<dbReference type="FunFam" id="1.10.110.10:FF:000002">
    <property type="entry name" value="Non-specific lipid-transfer protein"/>
    <property type="match status" value="1"/>
</dbReference>
<dbReference type="Gene3D" id="1.10.110.10">
    <property type="entry name" value="Plant lipid-transfer and hydrophobic proteins"/>
    <property type="match status" value="1"/>
</dbReference>
<dbReference type="InterPro" id="IPR036312">
    <property type="entry name" value="Bifun_inhib/LTP/seed_sf"/>
</dbReference>
<dbReference type="InterPro" id="IPR016140">
    <property type="entry name" value="Bifunc_inhib/LTP/seed_store"/>
</dbReference>
<dbReference type="InterPro" id="IPR000528">
    <property type="entry name" value="Plant_nsLTP"/>
</dbReference>
<dbReference type="PANTHER" id="PTHR33076">
    <property type="entry name" value="NON-SPECIFIC LIPID-TRANSFER PROTEIN 2-RELATED"/>
    <property type="match status" value="1"/>
</dbReference>
<dbReference type="Pfam" id="PF00234">
    <property type="entry name" value="Tryp_alpha_amyl"/>
    <property type="match status" value="1"/>
</dbReference>
<dbReference type="PRINTS" id="PR00382">
    <property type="entry name" value="LIPIDTRNSFER"/>
</dbReference>
<dbReference type="SMART" id="SM00499">
    <property type="entry name" value="AAI"/>
    <property type="match status" value="1"/>
</dbReference>
<dbReference type="SUPFAM" id="SSF47699">
    <property type="entry name" value="Bifunctional inhibitor/lipid-transfer protein/seed storage 2S albumin"/>
    <property type="match status" value="1"/>
</dbReference>
<dbReference type="PROSITE" id="PS00597">
    <property type="entry name" value="PLANT_LTP"/>
    <property type="match status" value="1"/>
</dbReference>
<gene>
    <name type="primary">LTP3</name>
</gene>
<evidence type="ECO:0000250" key="1"/>
<evidence type="ECO:0000255" key="2"/>
<evidence type="ECO:0000269" key="3">
    <source ref="1"/>
</evidence>
<evidence type="ECO:0000305" key="4"/>
<protein>
    <recommendedName>
        <fullName>Probable non-specific lipid-transfer protein 3</fullName>
        <shortName>TaLTP3</shortName>
    </recommendedName>
</protein>
<feature type="signal peptide" evidence="2">
    <location>
        <begin position="1"/>
        <end position="29"/>
    </location>
</feature>
<feature type="chain" id="PRO_0000404097" description="Probable non-specific lipid-transfer protein 3">
    <location>
        <begin position="30"/>
        <end position="122"/>
    </location>
</feature>
<feature type="disulfide bond" evidence="1">
    <location>
        <begin position="33"/>
        <end position="81"/>
    </location>
</feature>
<feature type="disulfide bond" evidence="1">
    <location>
        <begin position="43"/>
        <end position="58"/>
    </location>
</feature>
<feature type="disulfide bond" evidence="1">
    <location>
        <begin position="59"/>
        <end position="104"/>
    </location>
</feature>
<feature type="disulfide bond" evidence="1">
    <location>
        <begin position="79"/>
        <end position="118"/>
    </location>
</feature>
<accession>Q84N29</accession>
<proteinExistence type="evidence at transcript level"/>
<name>NLTP3_WHEAT</name>
<organism>
    <name type="scientific">Triticum aestivum</name>
    <name type="common">Wheat</name>
    <dbReference type="NCBI Taxonomy" id="4565"/>
    <lineage>
        <taxon>Eukaryota</taxon>
        <taxon>Viridiplantae</taxon>
        <taxon>Streptophyta</taxon>
        <taxon>Embryophyta</taxon>
        <taxon>Tracheophyta</taxon>
        <taxon>Spermatophyta</taxon>
        <taxon>Magnoliopsida</taxon>
        <taxon>Liliopsida</taxon>
        <taxon>Poales</taxon>
        <taxon>Poaceae</taxon>
        <taxon>BOP clade</taxon>
        <taxon>Pooideae</taxon>
        <taxon>Triticodae</taxon>
        <taxon>Triticeae</taxon>
        <taxon>Triticinae</taxon>
        <taxon>Triticum</taxon>
    </lineage>
</organism>
<keyword id="KW-1015">Disulfide bond</keyword>
<keyword id="KW-0446">Lipid-binding</keyword>
<keyword id="KW-1185">Reference proteome</keyword>
<keyword id="KW-0732">Signal</keyword>
<keyword id="KW-0813">Transport</keyword>
<comment type="function">
    <text evidence="1">Plant non-specific lipid-transfer proteins transfer phospholipids as well as galactolipids across membranes. May play a role in wax or cutin deposition in the cell walls of expanding epidermal cells and certain secretory tissues (By similarity).</text>
</comment>
<comment type="tissue specificity">
    <text evidence="3">Expressed in phloem. Also detected in the epidermis near the vascular tissues in resistant plants infected by Hessian fly larvae.</text>
</comment>
<comment type="induction">
    <text evidence="3">Up-regulated by Hessian fly larval infestation, salicylic acid, ethylene, H(2)O(2) and wounding. Not induced by methyl jasmonate.</text>
</comment>
<comment type="similarity">
    <text evidence="4">Belongs to the plant LTP family.</text>
</comment>
<reference key="1">
    <citation type="journal article" date="2005" name="Plant Sci.">
        <title>Differential expression of TaLTP3 and TaCOMT1 induced by Hessian fly larval infestation in a wheat line possessing H21 resistance gene.</title>
        <authorList>
            <person name="Jang C.S."/>
            <person name="Johnson J.W."/>
            <person name="Seo Y.W."/>
        </authorList>
    </citation>
    <scope>NUCLEOTIDE SEQUENCE [MRNA]</scope>
    <scope>INDUCTION BY PATHOGEN; METHYL JASMONATE; SALICYLIC ACID; ETHYLENE; HYDROGEN PEROXIDE AND WOUNDING</scope>
    <scope>TISSUE SPECIFICITY</scope>
</reference>
<sequence>MARLNSKAVAAAVVLAAVVLMMAGREASAALSCGQVDSKLAPCVAYVTGRASSISKECCSGVQGLNGLARSSPDRKIACRCLKSLATSIKSINMGKVSGVPGKCGVSVPFPISMSTNCNNVN</sequence>